<proteinExistence type="inferred from homology"/>
<feature type="chain" id="PRO_0000132757" description="DNA-directed RNA polymerase subunit Rpo3">
    <location>
        <begin position="1"/>
        <end position="264"/>
    </location>
</feature>
<feature type="binding site" evidence="1">
    <location>
        <position position="203"/>
    </location>
    <ligand>
        <name>[3Fe-4S] cluster</name>
        <dbReference type="ChEBI" id="CHEBI:21137"/>
    </ligand>
</feature>
<feature type="binding site" evidence="1">
    <location>
        <position position="206"/>
    </location>
    <ligand>
        <name>[3Fe-4S] cluster</name>
        <dbReference type="ChEBI" id="CHEBI:21137"/>
    </ligand>
</feature>
<feature type="binding site" evidence="1">
    <location>
        <position position="209"/>
    </location>
    <ligand>
        <name>[3Fe-4S] cluster</name>
        <dbReference type="ChEBI" id="CHEBI:21137"/>
    </ligand>
</feature>
<evidence type="ECO:0000255" key="1">
    <source>
        <dbReference type="HAMAP-Rule" id="MF_00320"/>
    </source>
</evidence>
<evidence type="ECO:0000305" key="2"/>
<organism>
    <name type="scientific">Methanothermobacter thermautotrophicus (strain ATCC 29096 / DSM 1053 / JCM 10044 / NBRC 100330 / Delta H)</name>
    <name type="common">Methanobacterium thermoautotrophicum</name>
    <dbReference type="NCBI Taxonomy" id="187420"/>
    <lineage>
        <taxon>Archaea</taxon>
        <taxon>Methanobacteriati</taxon>
        <taxon>Methanobacteriota</taxon>
        <taxon>Methanomada group</taxon>
        <taxon>Methanobacteria</taxon>
        <taxon>Methanobacteriales</taxon>
        <taxon>Methanobacteriaceae</taxon>
        <taxon>Methanothermobacter</taxon>
    </lineage>
</organism>
<reference key="1">
    <citation type="journal article" date="1997" name="J. Bacteriol.">
        <title>Complete genome sequence of Methanobacterium thermoautotrophicum deltaH: functional analysis and comparative genomics.</title>
        <authorList>
            <person name="Smith D.R."/>
            <person name="Doucette-Stamm L.A."/>
            <person name="Deloughery C."/>
            <person name="Lee H.-M."/>
            <person name="Dubois J."/>
            <person name="Aldredge T."/>
            <person name="Bashirzadeh R."/>
            <person name="Blakely D."/>
            <person name="Cook R."/>
            <person name="Gilbert K."/>
            <person name="Harrison D."/>
            <person name="Hoang L."/>
            <person name="Keagle P."/>
            <person name="Lumm W."/>
            <person name="Pothier B."/>
            <person name="Qiu D."/>
            <person name="Spadafora R."/>
            <person name="Vicare R."/>
            <person name="Wang Y."/>
            <person name="Wierzbowski J."/>
            <person name="Gibson R."/>
            <person name="Jiwani N."/>
            <person name="Caruso A."/>
            <person name="Bush D."/>
            <person name="Safer H."/>
            <person name="Patwell D."/>
            <person name="Prabhakar S."/>
            <person name="McDougall S."/>
            <person name="Shimer G."/>
            <person name="Goyal A."/>
            <person name="Pietrovski S."/>
            <person name="Church G.M."/>
            <person name="Daniels C.J."/>
            <person name="Mao J.-I."/>
            <person name="Rice P."/>
            <person name="Noelling J."/>
            <person name="Reeve J.N."/>
        </authorList>
    </citation>
    <scope>NUCLEOTIDE SEQUENCE [LARGE SCALE GENOMIC DNA]</scope>
    <source>
        <strain>ATCC 29096 / DSM 1053 / JCM 10044 / NBRC 100330 / Delta H</strain>
    </source>
</reference>
<protein>
    <recommendedName>
        <fullName evidence="1">DNA-directed RNA polymerase subunit Rpo3</fullName>
        <ecNumber evidence="1">2.7.7.6</ecNumber>
    </recommendedName>
    <alternativeName>
        <fullName evidence="1">DNA-directed RNA polymerase subunit D</fullName>
    </alternativeName>
</protein>
<name>RPO3_METTH</name>
<dbReference type="EC" id="2.7.7.6" evidence="1"/>
<dbReference type="EMBL" id="AE000666">
    <property type="protein sequence ID" value="AAB84545.1"/>
    <property type="molecule type" value="Genomic_DNA"/>
</dbReference>
<dbReference type="PIR" id="G69147">
    <property type="entry name" value="G69147"/>
</dbReference>
<dbReference type="RefSeq" id="WP_010875678.1">
    <property type="nucleotide sequence ID" value="NC_000916.1"/>
</dbReference>
<dbReference type="SMR" id="O26144"/>
<dbReference type="FunCoup" id="O26144">
    <property type="interactions" value="62"/>
</dbReference>
<dbReference type="STRING" id="187420.MTH_37"/>
<dbReference type="PaxDb" id="187420-MTH_37"/>
<dbReference type="EnsemblBacteria" id="AAB84545">
    <property type="protein sequence ID" value="AAB84545"/>
    <property type="gene ID" value="MTH_37"/>
</dbReference>
<dbReference type="KEGG" id="mth:MTH_37"/>
<dbReference type="PATRIC" id="fig|187420.15.peg.36"/>
<dbReference type="HOGENOM" id="CLU_038421_3_1_2"/>
<dbReference type="InParanoid" id="O26144"/>
<dbReference type="Proteomes" id="UP000005223">
    <property type="component" value="Chromosome"/>
</dbReference>
<dbReference type="GO" id="GO:0005737">
    <property type="term" value="C:cytoplasm"/>
    <property type="evidence" value="ECO:0007669"/>
    <property type="project" value="UniProtKB-SubCell"/>
</dbReference>
<dbReference type="GO" id="GO:0000428">
    <property type="term" value="C:DNA-directed RNA polymerase complex"/>
    <property type="evidence" value="ECO:0007669"/>
    <property type="project" value="UniProtKB-KW"/>
</dbReference>
<dbReference type="GO" id="GO:0051538">
    <property type="term" value="F:3 iron, 4 sulfur cluster binding"/>
    <property type="evidence" value="ECO:0007669"/>
    <property type="project" value="UniProtKB-KW"/>
</dbReference>
<dbReference type="GO" id="GO:0003677">
    <property type="term" value="F:DNA binding"/>
    <property type="evidence" value="ECO:0007669"/>
    <property type="project" value="UniProtKB-UniRule"/>
</dbReference>
<dbReference type="GO" id="GO:0003899">
    <property type="term" value="F:DNA-directed RNA polymerase activity"/>
    <property type="evidence" value="ECO:0007669"/>
    <property type="project" value="UniProtKB-UniRule"/>
</dbReference>
<dbReference type="GO" id="GO:0046872">
    <property type="term" value="F:metal ion binding"/>
    <property type="evidence" value="ECO:0007669"/>
    <property type="project" value="UniProtKB-KW"/>
</dbReference>
<dbReference type="GO" id="GO:0046983">
    <property type="term" value="F:protein dimerization activity"/>
    <property type="evidence" value="ECO:0007669"/>
    <property type="project" value="InterPro"/>
</dbReference>
<dbReference type="GO" id="GO:0006351">
    <property type="term" value="P:DNA-templated transcription"/>
    <property type="evidence" value="ECO:0007669"/>
    <property type="project" value="UniProtKB-UniRule"/>
</dbReference>
<dbReference type="CDD" id="cd07030">
    <property type="entry name" value="RNAP_D"/>
    <property type="match status" value="1"/>
</dbReference>
<dbReference type="Gene3D" id="3.30.70.3110">
    <property type="match status" value="1"/>
</dbReference>
<dbReference type="Gene3D" id="2.170.120.12">
    <property type="entry name" value="DNA-directed RNA polymerase, insert domain"/>
    <property type="match status" value="1"/>
</dbReference>
<dbReference type="Gene3D" id="3.30.1360.10">
    <property type="entry name" value="RNA polymerase, RBP11-like subunit"/>
    <property type="match status" value="1"/>
</dbReference>
<dbReference type="HAMAP" id="MF_00320">
    <property type="entry name" value="RNApol_arch_Rpo3"/>
    <property type="match status" value="1"/>
</dbReference>
<dbReference type="InterPro" id="IPR017896">
    <property type="entry name" value="4Fe4S_Fe-S-bd"/>
</dbReference>
<dbReference type="InterPro" id="IPR001514">
    <property type="entry name" value="DNA-dir_RNA_pol_30-40kDasu_CS"/>
</dbReference>
<dbReference type="InterPro" id="IPR011262">
    <property type="entry name" value="DNA-dir_RNA_pol_insert"/>
</dbReference>
<dbReference type="InterPro" id="IPR011263">
    <property type="entry name" value="DNA-dir_RNA_pol_RpoA/D/Rpb3"/>
</dbReference>
<dbReference type="InterPro" id="IPR036603">
    <property type="entry name" value="RBP11-like"/>
</dbReference>
<dbReference type="InterPro" id="IPR022842">
    <property type="entry name" value="RNAP_Rpo3/Rpb3/RPAC1"/>
</dbReference>
<dbReference type="InterPro" id="IPR036643">
    <property type="entry name" value="RNApol_insert_sf"/>
</dbReference>
<dbReference type="InterPro" id="IPR050518">
    <property type="entry name" value="Rpo3/RPB3_RNA_Pol_subunit"/>
</dbReference>
<dbReference type="NCBIfam" id="NF001988">
    <property type="entry name" value="PRK00783.1"/>
    <property type="match status" value="1"/>
</dbReference>
<dbReference type="PANTHER" id="PTHR11800">
    <property type="entry name" value="DNA-DIRECTED RNA POLYMERASE"/>
    <property type="match status" value="1"/>
</dbReference>
<dbReference type="PANTHER" id="PTHR11800:SF2">
    <property type="entry name" value="DNA-DIRECTED RNA POLYMERASE II SUBUNIT RPB3"/>
    <property type="match status" value="1"/>
</dbReference>
<dbReference type="Pfam" id="PF13237">
    <property type="entry name" value="Fer4_10"/>
    <property type="match status" value="1"/>
</dbReference>
<dbReference type="Pfam" id="PF01000">
    <property type="entry name" value="RNA_pol_A_bac"/>
    <property type="match status" value="1"/>
</dbReference>
<dbReference type="Pfam" id="PF01193">
    <property type="entry name" value="RNA_pol_L"/>
    <property type="match status" value="1"/>
</dbReference>
<dbReference type="SMART" id="SM00662">
    <property type="entry name" value="RPOLD"/>
    <property type="match status" value="1"/>
</dbReference>
<dbReference type="SUPFAM" id="SSF56553">
    <property type="entry name" value="Insert subdomain of RNA polymerase alpha subunit"/>
    <property type="match status" value="1"/>
</dbReference>
<dbReference type="SUPFAM" id="SSF55257">
    <property type="entry name" value="RBP11-like subunits of RNA polymerase"/>
    <property type="match status" value="1"/>
</dbReference>
<dbReference type="PROSITE" id="PS00198">
    <property type="entry name" value="4FE4S_FER_1"/>
    <property type="match status" value="1"/>
</dbReference>
<dbReference type="PROSITE" id="PS51379">
    <property type="entry name" value="4FE4S_FER_2"/>
    <property type="match status" value="2"/>
</dbReference>
<dbReference type="PROSITE" id="PS00446">
    <property type="entry name" value="RNA_POL_D_30KD"/>
    <property type="match status" value="1"/>
</dbReference>
<comment type="function">
    <text evidence="1">DNA-dependent RNA polymerase (RNAP) catalyzes the transcription of DNA into RNA using the four ribonucleoside triphosphates as substrates.</text>
</comment>
<comment type="catalytic activity">
    <reaction evidence="1">
        <text>RNA(n) + a ribonucleoside 5'-triphosphate = RNA(n+1) + diphosphate</text>
        <dbReference type="Rhea" id="RHEA:21248"/>
        <dbReference type="Rhea" id="RHEA-COMP:14527"/>
        <dbReference type="Rhea" id="RHEA-COMP:17342"/>
        <dbReference type="ChEBI" id="CHEBI:33019"/>
        <dbReference type="ChEBI" id="CHEBI:61557"/>
        <dbReference type="ChEBI" id="CHEBI:140395"/>
        <dbReference type="EC" id="2.7.7.6"/>
    </reaction>
</comment>
<comment type="cofactor">
    <cofactor evidence="1">
        <name>[3Fe-4S] cluster</name>
        <dbReference type="ChEBI" id="CHEBI:21137"/>
    </cofactor>
    <text evidence="1">Binds 1 [3Fe-4S] cluster.</text>
</comment>
<comment type="subunit">
    <text evidence="1">Part of the RNA polymerase complex.</text>
</comment>
<comment type="subcellular location">
    <subcellularLocation>
        <location evidence="1">Cytoplasm</location>
    </subcellularLocation>
</comment>
<comment type="similarity">
    <text evidence="1">Belongs to the archaeal Rpo3/eukaryotic RPB3 RNA polymerase subunit family.</text>
</comment>
<comment type="caution">
    <text evidence="2">X-ray crystallography in other archaea shows this protein binds a 3Fe-4S cluster, although a 4Fe-4S cluster has been suggested to be present in this protein.</text>
</comment>
<gene>
    <name evidence="1" type="primary">rpo3</name>
    <name evidence="1" type="synonym">rpoD</name>
    <name type="ordered locus">MTH_37</name>
</gene>
<sequence length="264" mass="29395">MDIALKEKTDTEMVFVVSGVTVPFINAIRRICMMEVPKLAIEYVNMYRNDAKMFDEVLAHRLGLVPLAADPEFAESLKMPEECDCEEYCSECSVSLTLRKKGPGVVYSGDLVSETPAVKPVYPDIPLVKLGDDDELELEAVAQLGVGREHAKWEPTTACAYKYYPRIEFSEDCDECLECIEACPRDVLGEESGKPVVVDLENCSMCKSCVRACDKRAIDVGYEEGKFIFRIETDGSVDPKDVLLKACDILRDKAEQVITFCEGG</sequence>
<keyword id="KW-0003">3Fe-4S</keyword>
<keyword id="KW-0963">Cytoplasm</keyword>
<keyword id="KW-0240">DNA-directed RNA polymerase</keyword>
<keyword id="KW-0408">Iron</keyword>
<keyword id="KW-0411">Iron-sulfur</keyword>
<keyword id="KW-0479">Metal-binding</keyword>
<keyword id="KW-0548">Nucleotidyltransferase</keyword>
<keyword id="KW-1185">Reference proteome</keyword>
<keyword id="KW-0804">Transcription</keyword>
<keyword id="KW-0808">Transferase</keyword>
<accession>O26144</accession>